<gene>
    <name type="primary">yffR</name>
    <name type="ordered locus">b2449</name>
</gene>
<accession>P76549</accession>
<reference key="1">
    <citation type="journal article" date="1997" name="Science">
        <title>The complete genome sequence of Escherichia coli K-12.</title>
        <authorList>
            <person name="Blattner F.R."/>
            <person name="Plunkett G. III"/>
            <person name="Bloch C.A."/>
            <person name="Perna N.T."/>
            <person name="Burland V."/>
            <person name="Riley M."/>
            <person name="Collado-Vides J."/>
            <person name="Glasner J.D."/>
            <person name="Rode C.K."/>
            <person name="Mayhew G.F."/>
            <person name="Gregor J."/>
            <person name="Davis N.W."/>
            <person name="Kirkpatrick H.A."/>
            <person name="Goeden M.A."/>
            <person name="Rose D.J."/>
            <person name="Mau B."/>
            <person name="Shao Y."/>
        </authorList>
    </citation>
    <scope>NUCLEOTIDE SEQUENCE [LARGE SCALE GENOMIC DNA]</scope>
    <source>
        <strain>K12 / MG1655 / ATCC 47076</strain>
    </source>
</reference>
<name>YFFR_ECOLI</name>
<sequence length="130" mass="14554">MKVLGNILWWAFVGFMAYATLIKPDNTDPAVVNYEEPLPMELANYGEPGEGAKIMNAAKIMGRDYAWKHVKEDRLPCLFAAGVVADNILVKYHFSNETEFKLKAAAVRECANVAENNGFVLVGRVFEKRN</sequence>
<organism>
    <name type="scientific">Escherichia coli (strain K12)</name>
    <dbReference type="NCBI Taxonomy" id="83333"/>
    <lineage>
        <taxon>Bacteria</taxon>
        <taxon>Pseudomonadati</taxon>
        <taxon>Pseudomonadota</taxon>
        <taxon>Gammaproteobacteria</taxon>
        <taxon>Enterobacterales</taxon>
        <taxon>Enterobacteriaceae</taxon>
        <taxon>Escherichia</taxon>
    </lineage>
</organism>
<protein>
    <recommendedName>
        <fullName>Uncharacterized protein YffR</fullName>
    </recommendedName>
</protein>
<proteinExistence type="inferred from homology"/>
<feature type="signal peptide" evidence="1">
    <location>
        <begin position="1"/>
        <end position="19"/>
    </location>
</feature>
<feature type="chain" id="PRO_0000013889" description="Uncharacterized protein YffR">
    <location>
        <begin position="20"/>
        <end position="130"/>
    </location>
</feature>
<dbReference type="EMBL" id="U00096">
    <property type="protein sequence ID" value="AAC75502.1"/>
    <property type="molecule type" value="Genomic_DNA"/>
</dbReference>
<dbReference type="PIR" id="H65019">
    <property type="entry name" value="H65019"/>
</dbReference>
<dbReference type="RefSeq" id="NP_416944.1">
    <property type="nucleotide sequence ID" value="NC_000913.3"/>
</dbReference>
<dbReference type="RefSeq" id="WP_000865921.1">
    <property type="nucleotide sequence ID" value="NZ_JACEFS010000004.1"/>
</dbReference>
<dbReference type="FunCoup" id="P76549">
    <property type="interactions" value="33"/>
</dbReference>
<dbReference type="STRING" id="511145.b2449"/>
<dbReference type="jPOST" id="P76549"/>
<dbReference type="PaxDb" id="511145-b2449"/>
<dbReference type="EnsemblBacteria" id="AAC75502">
    <property type="protein sequence ID" value="AAC75502"/>
    <property type="gene ID" value="b2449"/>
</dbReference>
<dbReference type="GeneID" id="946931"/>
<dbReference type="KEGG" id="eco:b2449"/>
<dbReference type="KEGG" id="ecoc:C3026_13595"/>
<dbReference type="PATRIC" id="fig|511145.12.peg.2542"/>
<dbReference type="EchoBASE" id="EB3931"/>
<dbReference type="InParanoid" id="P76549"/>
<dbReference type="BioCyc" id="EcoCyc:G7279-MONOMER"/>
<dbReference type="PRO" id="PR:P76549"/>
<dbReference type="Proteomes" id="UP000000625">
    <property type="component" value="Chromosome"/>
</dbReference>
<evidence type="ECO:0000255" key="1"/>
<keyword id="KW-1185">Reference proteome</keyword>
<keyword id="KW-0732">Signal</keyword>